<proteinExistence type="inferred from homology"/>
<gene>
    <name evidence="1" type="primary">yidC</name>
    <name type="ordered locus">Aasi_0237</name>
</gene>
<dbReference type="EMBL" id="CP001102">
    <property type="protein sequence ID" value="ACE05680.1"/>
    <property type="molecule type" value="Genomic_DNA"/>
</dbReference>
<dbReference type="RefSeq" id="WP_012472438.1">
    <property type="nucleotide sequence ID" value="NC_010830.1"/>
</dbReference>
<dbReference type="SMR" id="B3ER28"/>
<dbReference type="STRING" id="452471.Aasi_0237"/>
<dbReference type="KEGG" id="aas:Aasi_0237"/>
<dbReference type="eggNOG" id="COG0706">
    <property type="taxonomic scope" value="Bacteria"/>
</dbReference>
<dbReference type="HOGENOM" id="CLU_016535_2_0_10"/>
<dbReference type="OrthoDB" id="9780552at2"/>
<dbReference type="Proteomes" id="UP000001227">
    <property type="component" value="Chromosome"/>
</dbReference>
<dbReference type="GO" id="GO:0005886">
    <property type="term" value="C:plasma membrane"/>
    <property type="evidence" value="ECO:0007669"/>
    <property type="project" value="UniProtKB-SubCell"/>
</dbReference>
<dbReference type="GO" id="GO:0032977">
    <property type="term" value="F:membrane insertase activity"/>
    <property type="evidence" value="ECO:0007669"/>
    <property type="project" value="InterPro"/>
</dbReference>
<dbReference type="GO" id="GO:0051205">
    <property type="term" value="P:protein insertion into membrane"/>
    <property type="evidence" value="ECO:0007669"/>
    <property type="project" value="TreeGrafter"/>
</dbReference>
<dbReference type="GO" id="GO:0015031">
    <property type="term" value="P:protein transport"/>
    <property type="evidence" value="ECO:0007669"/>
    <property type="project" value="UniProtKB-KW"/>
</dbReference>
<dbReference type="CDD" id="cd20070">
    <property type="entry name" value="5TM_YidC_Alb3"/>
    <property type="match status" value="1"/>
</dbReference>
<dbReference type="CDD" id="cd19961">
    <property type="entry name" value="EcYidC-like_peri"/>
    <property type="match status" value="1"/>
</dbReference>
<dbReference type="Gene3D" id="2.70.98.90">
    <property type="match status" value="1"/>
</dbReference>
<dbReference type="HAMAP" id="MF_01810">
    <property type="entry name" value="YidC_type1"/>
    <property type="match status" value="1"/>
</dbReference>
<dbReference type="InterPro" id="IPR019998">
    <property type="entry name" value="Membr_insert_YidC"/>
</dbReference>
<dbReference type="InterPro" id="IPR028053">
    <property type="entry name" value="Membr_insert_YidC_N"/>
</dbReference>
<dbReference type="InterPro" id="IPR001708">
    <property type="entry name" value="YidC/ALB3/OXA1/COX18"/>
</dbReference>
<dbReference type="InterPro" id="IPR028055">
    <property type="entry name" value="YidC/Oxa/ALB_C"/>
</dbReference>
<dbReference type="InterPro" id="IPR047196">
    <property type="entry name" value="YidC_ALB_C"/>
</dbReference>
<dbReference type="InterPro" id="IPR038221">
    <property type="entry name" value="YidC_periplasmic_sf"/>
</dbReference>
<dbReference type="NCBIfam" id="NF002356">
    <property type="entry name" value="PRK01318.2-3"/>
    <property type="match status" value="1"/>
</dbReference>
<dbReference type="NCBIfam" id="TIGR03593">
    <property type="entry name" value="yidC_nterm"/>
    <property type="match status" value="1"/>
</dbReference>
<dbReference type="NCBIfam" id="TIGR03592">
    <property type="entry name" value="yidC_oxa1_cterm"/>
    <property type="match status" value="1"/>
</dbReference>
<dbReference type="PANTHER" id="PTHR12428:SF65">
    <property type="entry name" value="CYTOCHROME C OXIDASE ASSEMBLY PROTEIN COX18, MITOCHONDRIAL"/>
    <property type="match status" value="1"/>
</dbReference>
<dbReference type="PANTHER" id="PTHR12428">
    <property type="entry name" value="OXA1"/>
    <property type="match status" value="1"/>
</dbReference>
<dbReference type="Pfam" id="PF02096">
    <property type="entry name" value="60KD_IMP"/>
    <property type="match status" value="1"/>
</dbReference>
<dbReference type="Pfam" id="PF14849">
    <property type="entry name" value="YidC_periplas"/>
    <property type="match status" value="1"/>
</dbReference>
<dbReference type="PRINTS" id="PR00701">
    <property type="entry name" value="60KDINNERMP"/>
</dbReference>
<protein>
    <recommendedName>
        <fullName evidence="1">Membrane protein insertase YidC</fullName>
    </recommendedName>
    <alternativeName>
        <fullName evidence="1">Foldase YidC</fullName>
    </alternativeName>
    <alternativeName>
        <fullName evidence="1">Membrane integrase YidC</fullName>
    </alternativeName>
    <alternativeName>
        <fullName evidence="1">Membrane protein YidC</fullName>
    </alternativeName>
</protein>
<comment type="function">
    <text evidence="1">Required for the insertion and/or proper folding and/or complex formation of integral membrane proteins into the membrane. Involved in integration of membrane proteins that insert both dependently and independently of the Sec translocase complex, as well as at least some lipoproteins. Aids folding of multispanning membrane proteins.</text>
</comment>
<comment type="subunit">
    <text evidence="1">Interacts with the Sec translocase complex via SecD. Specifically interacts with transmembrane segments of nascent integral membrane proteins during membrane integration.</text>
</comment>
<comment type="subcellular location">
    <subcellularLocation>
        <location evidence="1">Cell inner membrane</location>
        <topology evidence="1">Multi-pass membrane protein</topology>
    </subcellularLocation>
</comment>
<comment type="similarity">
    <text evidence="1">Belongs to the OXA1/ALB3/YidC family. Type 1 subfamily.</text>
</comment>
<organism>
    <name type="scientific">Amoebophilus asiaticus (strain 5a2)</name>
    <dbReference type="NCBI Taxonomy" id="452471"/>
    <lineage>
        <taxon>Bacteria</taxon>
        <taxon>Pseudomonadati</taxon>
        <taxon>Bacteroidota</taxon>
        <taxon>Cytophagia</taxon>
        <taxon>Cytophagales</taxon>
        <taxon>Amoebophilaceae</taxon>
        <taxon>Candidatus Amoebophilus</taxon>
    </lineage>
</organism>
<accession>B3ER28</accession>
<keyword id="KW-0997">Cell inner membrane</keyword>
<keyword id="KW-1003">Cell membrane</keyword>
<keyword id="KW-0143">Chaperone</keyword>
<keyword id="KW-0472">Membrane</keyword>
<keyword id="KW-0653">Protein transport</keyword>
<keyword id="KW-1185">Reference proteome</keyword>
<keyword id="KW-0812">Transmembrane</keyword>
<keyword id="KW-1133">Transmembrane helix</keyword>
<keyword id="KW-0813">Transport</keyword>
<name>YIDC_AMOA5</name>
<sequence length="596" mass="68192">MDKNKLIGLILISILLIVYTHFFDNKLPKTSQQTTTQEVAHNTSNIQLQTSEATLNLQTGIFAKATQGVTKDIILENKDIRVTLSSHGAKVKEVILKQYKDYLGKPLKLLDEQSTNMGFQFTSNQASINTNTLFFNTDDTDQYIQQASIGKVTFMIPLGEPNQYLQQVYTLPSEGYALTQNWEFVGTENYIDQGKIDFVWHDFIKRAEKDVQACRNKTTINYYLANKTFKHLKEHTEQKEEQTIQTPIQWLAIKQRFFTAGIFTDQPFESGNILLKPTTQPDKFVKEAYTTVSLASNNLQPIQKGTFRFYFGPNTYKDLNSFAQGFSKNLPLGWPIVKWINLYLIIPIFSFIEKYVSNYGLVILILVIFIKLLLLPLSYKSYISMAEMKVLKPTLDALKAKYGNDMQSVQMEQVKLYREMGINPLSGCIPVLLQMPILLAMFNFFPNAIDLRQKAFLWAPDLSTYDAIINLPFQIPFYGSHVSLFTLLMTASTILYTWSSNQVNTPQGPMKTMSYLLPITFMFILNSFPAGLSFYYFVSNLFTFAQQALIKRFVNEDKIKAKLAKNKEKSANNKEGSFKKRFQDAIKASASHKGKK</sequence>
<reference key="1">
    <citation type="journal article" date="2010" name="J. Bacteriol.">
        <title>The genome of the amoeba symbiont 'Candidatus Amoebophilus asiaticus' reveals common mechanisms for host cell interaction among amoeba-associated bacteria.</title>
        <authorList>
            <person name="Schmitz-Esser S."/>
            <person name="Tischler P."/>
            <person name="Arnold R."/>
            <person name="Montanaro J."/>
            <person name="Wagner M."/>
            <person name="Rattei T."/>
            <person name="Horn M."/>
        </authorList>
    </citation>
    <scope>NUCLEOTIDE SEQUENCE [LARGE SCALE GENOMIC DNA]</scope>
    <source>
        <strain>5a2</strain>
    </source>
</reference>
<feature type="chain" id="PRO_1000187626" description="Membrane protein insertase YidC">
    <location>
        <begin position="1"/>
        <end position="596"/>
    </location>
</feature>
<feature type="transmembrane region" description="Helical" evidence="1">
    <location>
        <begin position="4"/>
        <end position="24"/>
    </location>
</feature>
<feature type="transmembrane region" description="Helical" evidence="1">
    <location>
        <begin position="332"/>
        <end position="352"/>
    </location>
</feature>
<feature type="transmembrane region" description="Helical" evidence="1">
    <location>
        <begin position="359"/>
        <end position="379"/>
    </location>
</feature>
<feature type="transmembrane region" description="Helical" evidence="1">
    <location>
        <begin position="425"/>
        <end position="445"/>
    </location>
</feature>
<feature type="transmembrane region" description="Helical" evidence="1">
    <location>
        <begin position="468"/>
        <end position="488"/>
    </location>
</feature>
<feature type="transmembrane region" description="Helical" evidence="1">
    <location>
        <begin position="518"/>
        <end position="538"/>
    </location>
</feature>
<feature type="region of interest" description="Disordered" evidence="2">
    <location>
        <begin position="565"/>
        <end position="596"/>
    </location>
</feature>
<feature type="compositionally biased region" description="Basic and acidic residues" evidence="2">
    <location>
        <begin position="565"/>
        <end position="584"/>
    </location>
</feature>
<evidence type="ECO:0000255" key="1">
    <source>
        <dbReference type="HAMAP-Rule" id="MF_01810"/>
    </source>
</evidence>
<evidence type="ECO:0000256" key="2">
    <source>
        <dbReference type="SAM" id="MobiDB-lite"/>
    </source>
</evidence>